<evidence type="ECO:0000255" key="1">
    <source>
        <dbReference type="HAMAP-Rule" id="MF_00379"/>
    </source>
</evidence>
<evidence type="ECO:0000269" key="2">
    <source>
    </source>
</evidence>
<evidence type="ECO:0000269" key="3">
    <source>
    </source>
</evidence>
<evidence type="ECO:0000269" key="4">
    <source>
    </source>
</evidence>
<evidence type="ECO:0000269" key="5">
    <source>
    </source>
</evidence>
<evidence type="ECO:0000269" key="6">
    <source>
    </source>
</evidence>
<evidence type="ECO:0000305" key="7"/>
<evidence type="ECO:0007829" key="8">
    <source>
        <dbReference type="PDB" id="2GJ8"/>
    </source>
</evidence>
<gene>
    <name evidence="1" type="primary">mnmE</name>
    <name evidence="1" type="synonym">thdF</name>
    <name evidence="1" type="synonym">trmE</name>
    <name type="ordered locus">b3706</name>
    <name type="ordered locus">JW3684</name>
</gene>
<accession>P25522</accession>
<accession>Q2M819</accession>
<dbReference type="EC" id="3.6.-.-" evidence="1"/>
<dbReference type="EMBL" id="S57109">
    <property type="protein sequence ID" value="AAB19981.1"/>
    <property type="status" value="ALT_SEQ"/>
    <property type="molecule type" value="Genomic_DNA"/>
</dbReference>
<dbReference type="EMBL" id="L10328">
    <property type="protein sequence ID" value="AAA62057.1"/>
    <property type="molecule type" value="Genomic_DNA"/>
</dbReference>
<dbReference type="EMBL" id="U00096">
    <property type="protein sequence ID" value="AAC76729.1"/>
    <property type="molecule type" value="Genomic_DNA"/>
</dbReference>
<dbReference type="EMBL" id="AP009048">
    <property type="protein sequence ID" value="BAE77587.1"/>
    <property type="molecule type" value="Genomic_DNA"/>
</dbReference>
<dbReference type="PIR" id="A38160">
    <property type="entry name" value="A38160"/>
</dbReference>
<dbReference type="PIR" id="C65173">
    <property type="entry name" value="C65173"/>
</dbReference>
<dbReference type="RefSeq" id="NP_418162.1">
    <property type="nucleotide sequence ID" value="NC_000913.3"/>
</dbReference>
<dbReference type="RefSeq" id="WP_001282346.1">
    <property type="nucleotide sequence ID" value="NZ_SSZK01000035.1"/>
</dbReference>
<dbReference type="PDB" id="1RFL">
    <property type="method" value="NMR"/>
    <property type="chains" value="A=210-377"/>
</dbReference>
<dbReference type="PDB" id="2GJ8">
    <property type="method" value="X-ray"/>
    <property type="resolution" value="1.70 A"/>
    <property type="chains" value="A/B/C/D=216-384"/>
</dbReference>
<dbReference type="PDB" id="2GJ9">
    <property type="method" value="X-ray"/>
    <property type="resolution" value="2.00 A"/>
    <property type="chains" value="A/B/C/D=216-384"/>
</dbReference>
<dbReference type="PDB" id="2GJA">
    <property type="method" value="X-ray"/>
    <property type="resolution" value="1.85 A"/>
    <property type="chains" value="A/B=216-384"/>
</dbReference>
<dbReference type="PDBsum" id="1RFL"/>
<dbReference type="PDBsum" id="2GJ8"/>
<dbReference type="PDBsum" id="2GJ9"/>
<dbReference type="PDBsum" id="2GJA"/>
<dbReference type="SMR" id="P25522"/>
<dbReference type="BioGRID" id="4261522">
    <property type="interactions" value="160"/>
</dbReference>
<dbReference type="BioGRID" id="852524">
    <property type="interactions" value="3"/>
</dbReference>
<dbReference type="ComplexPortal" id="CPX-5361">
    <property type="entry name" value="tRNA uridine 5-carboxymethylaminomethyl modification complex"/>
</dbReference>
<dbReference type="DIP" id="DIP-11033N"/>
<dbReference type="FunCoup" id="P25522">
    <property type="interactions" value="856"/>
</dbReference>
<dbReference type="IntAct" id="P25522">
    <property type="interactions" value="24"/>
</dbReference>
<dbReference type="STRING" id="511145.b3706"/>
<dbReference type="jPOST" id="P25522"/>
<dbReference type="PaxDb" id="511145-b3706"/>
<dbReference type="EnsemblBacteria" id="AAC76729">
    <property type="protein sequence ID" value="AAC76729"/>
    <property type="gene ID" value="b3706"/>
</dbReference>
<dbReference type="GeneID" id="86861818"/>
<dbReference type="GeneID" id="948222"/>
<dbReference type="KEGG" id="ecj:JW3684"/>
<dbReference type="KEGG" id="eco:b3706"/>
<dbReference type="KEGG" id="ecoc:C3026_20095"/>
<dbReference type="PATRIC" id="fig|1411691.4.peg.2997"/>
<dbReference type="EchoBASE" id="EB0990"/>
<dbReference type="eggNOG" id="COG0486">
    <property type="taxonomic scope" value="Bacteria"/>
</dbReference>
<dbReference type="HOGENOM" id="CLU_019624_4_1_6"/>
<dbReference type="InParanoid" id="P25522"/>
<dbReference type="OMA" id="EFHCHGG"/>
<dbReference type="OrthoDB" id="9805918at2"/>
<dbReference type="PhylomeDB" id="P25522"/>
<dbReference type="BioCyc" id="EcoCyc:EG10997-MONOMER"/>
<dbReference type="BioCyc" id="MetaCyc:EG10997-MONOMER"/>
<dbReference type="EvolutionaryTrace" id="P25522"/>
<dbReference type="PRO" id="PR:P25522"/>
<dbReference type="Proteomes" id="UP000000625">
    <property type="component" value="Chromosome"/>
</dbReference>
<dbReference type="GO" id="GO:0005737">
    <property type="term" value="C:cytoplasm"/>
    <property type="evidence" value="ECO:0000314"/>
    <property type="project" value="EcoCyc"/>
</dbReference>
<dbReference type="GO" id="GO:0005829">
    <property type="term" value="C:cytosol"/>
    <property type="evidence" value="ECO:0000314"/>
    <property type="project" value="EcoCyc"/>
</dbReference>
<dbReference type="GO" id="GO:0002144">
    <property type="term" value="C:cytosolic tRNA wobble base thiouridylase complex"/>
    <property type="evidence" value="ECO:0000353"/>
    <property type="project" value="ComplexPortal"/>
</dbReference>
<dbReference type="GO" id="GO:0005886">
    <property type="term" value="C:plasma membrane"/>
    <property type="evidence" value="ECO:0000314"/>
    <property type="project" value="EcoCyc"/>
</dbReference>
<dbReference type="GO" id="GO:0019003">
    <property type="term" value="F:GDP binding"/>
    <property type="evidence" value="ECO:0000314"/>
    <property type="project" value="EcoCyc"/>
</dbReference>
<dbReference type="GO" id="GO:0005525">
    <property type="term" value="F:GTP binding"/>
    <property type="evidence" value="ECO:0000314"/>
    <property type="project" value="EcoCyc"/>
</dbReference>
<dbReference type="GO" id="GO:0003924">
    <property type="term" value="F:GTPase activity"/>
    <property type="evidence" value="ECO:0000314"/>
    <property type="project" value="EcoCyc"/>
</dbReference>
<dbReference type="GO" id="GO:0042802">
    <property type="term" value="F:identical protein binding"/>
    <property type="evidence" value="ECO:0000353"/>
    <property type="project" value="IntAct"/>
</dbReference>
<dbReference type="GO" id="GO:0030955">
    <property type="term" value="F:potassium ion binding"/>
    <property type="evidence" value="ECO:0000314"/>
    <property type="project" value="EcoCyc"/>
</dbReference>
<dbReference type="GO" id="GO:0042803">
    <property type="term" value="F:protein homodimerization activity"/>
    <property type="evidence" value="ECO:0000314"/>
    <property type="project" value="EcoCyc"/>
</dbReference>
<dbReference type="GO" id="GO:0061077">
    <property type="term" value="P:chaperone-mediated protein folding"/>
    <property type="evidence" value="ECO:0000314"/>
    <property type="project" value="EcoCyc"/>
</dbReference>
<dbReference type="GO" id="GO:0140018">
    <property type="term" value="P:regulation of cytoplasmic translational fidelity"/>
    <property type="evidence" value="ECO:0000303"/>
    <property type="project" value="ComplexPortal"/>
</dbReference>
<dbReference type="GO" id="GO:0009268">
    <property type="term" value="P:response to pH"/>
    <property type="evidence" value="ECO:0000315"/>
    <property type="project" value="EcoCyc"/>
</dbReference>
<dbReference type="GO" id="GO:0030488">
    <property type="term" value="P:tRNA methylation"/>
    <property type="evidence" value="ECO:0000315"/>
    <property type="project" value="EcoCyc"/>
</dbReference>
<dbReference type="GO" id="GO:0002926">
    <property type="term" value="P:tRNA wobble base 5-methoxycarbonylmethyl-2-thiouridinylation"/>
    <property type="evidence" value="ECO:0000314"/>
    <property type="project" value="ComplexPortal"/>
</dbReference>
<dbReference type="GO" id="GO:0002098">
    <property type="term" value="P:tRNA wobble uridine modification"/>
    <property type="evidence" value="ECO:0000314"/>
    <property type="project" value="EcoCyc"/>
</dbReference>
<dbReference type="CDD" id="cd04164">
    <property type="entry name" value="trmE"/>
    <property type="match status" value="1"/>
</dbReference>
<dbReference type="CDD" id="cd14858">
    <property type="entry name" value="TrmE_N"/>
    <property type="match status" value="1"/>
</dbReference>
<dbReference type="FunFam" id="3.30.1360.120:FF:000001">
    <property type="entry name" value="tRNA modification GTPase MnmE"/>
    <property type="match status" value="1"/>
</dbReference>
<dbReference type="FunFam" id="3.40.50.300:FF:000249">
    <property type="entry name" value="tRNA modification GTPase MnmE"/>
    <property type="match status" value="1"/>
</dbReference>
<dbReference type="Gene3D" id="3.40.50.300">
    <property type="entry name" value="P-loop containing nucleotide triphosphate hydrolases"/>
    <property type="match status" value="1"/>
</dbReference>
<dbReference type="Gene3D" id="3.30.1360.120">
    <property type="entry name" value="Probable tRNA modification gtpase trme, domain 1"/>
    <property type="match status" value="1"/>
</dbReference>
<dbReference type="Gene3D" id="1.20.120.430">
    <property type="entry name" value="tRNA modification GTPase MnmE domain 2"/>
    <property type="match status" value="1"/>
</dbReference>
<dbReference type="HAMAP" id="MF_00379">
    <property type="entry name" value="GTPase_MnmE"/>
    <property type="match status" value="1"/>
</dbReference>
<dbReference type="InterPro" id="IPR031168">
    <property type="entry name" value="G_TrmE"/>
</dbReference>
<dbReference type="InterPro" id="IPR006073">
    <property type="entry name" value="GTP-bd"/>
</dbReference>
<dbReference type="InterPro" id="IPR018948">
    <property type="entry name" value="GTP-bd_TrmE_N"/>
</dbReference>
<dbReference type="InterPro" id="IPR004520">
    <property type="entry name" value="GTPase_MnmE"/>
</dbReference>
<dbReference type="InterPro" id="IPR027368">
    <property type="entry name" value="MnmE_dom2"/>
</dbReference>
<dbReference type="InterPro" id="IPR025867">
    <property type="entry name" value="MnmE_helical"/>
</dbReference>
<dbReference type="InterPro" id="IPR027417">
    <property type="entry name" value="P-loop_NTPase"/>
</dbReference>
<dbReference type="InterPro" id="IPR005225">
    <property type="entry name" value="Small_GTP-bd"/>
</dbReference>
<dbReference type="InterPro" id="IPR027266">
    <property type="entry name" value="TrmE/GcvT_dom1"/>
</dbReference>
<dbReference type="NCBIfam" id="TIGR00450">
    <property type="entry name" value="mnmE_trmE_thdF"/>
    <property type="match status" value="1"/>
</dbReference>
<dbReference type="NCBIfam" id="NF003661">
    <property type="entry name" value="PRK05291.1-3"/>
    <property type="match status" value="1"/>
</dbReference>
<dbReference type="NCBIfam" id="TIGR00231">
    <property type="entry name" value="small_GTP"/>
    <property type="match status" value="1"/>
</dbReference>
<dbReference type="PANTHER" id="PTHR42714">
    <property type="entry name" value="TRNA MODIFICATION GTPASE GTPBP3"/>
    <property type="match status" value="1"/>
</dbReference>
<dbReference type="PANTHER" id="PTHR42714:SF2">
    <property type="entry name" value="TRNA MODIFICATION GTPASE GTPBP3, MITOCHONDRIAL"/>
    <property type="match status" value="1"/>
</dbReference>
<dbReference type="Pfam" id="PF01926">
    <property type="entry name" value="MMR_HSR1"/>
    <property type="match status" value="1"/>
</dbReference>
<dbReference type="Pfam" id="PF12631">
    <property type="entry name" value="MnmE_helical"/>
    <property type="match status" value="1"/>
</dbReference>
<dbReference type="Pfam" id="PF10396">
    <property type="entry name" value="TrmE_N"/>
    <property type="match status" value="1"/>
</dbReference>
<dbReference type="SUPFAM" id="SSF52540">
    <property type="entry name" value="P-loop containing nucleoside triphosphate hydrolases"/>
    <property type="match status" value="1"/>
</dbReference>
<dbReference type="SUPFAM" id="SSF116878">
    <property type="entry name" value="TrmE connector domain"/>
    <property type="match status" value="1"/>
</dbReference>
<dbReference type="PROSITE" id="PS51709">
    <property type="entry name" value="G_TRME"/>
    <property type="match status" value="1"/>
</dbReference>
<keyword id="KW-0002">3D-structure</keyword>
<keyword id="KW-0963">Cytoplasm</keyword>
<keyword id="KW-0342">GTP-binding</keyword>
<keyword id="KW-0378">Hydrolase</keyword>
<keyword id="KW-0460">Magnesium</keyword>
<keyword id="KW-0479">Metal-binding</keyword>
<keyword id="KW-0547">Nucleotide-binding</keyword>
<keyword id="KW-0630">Potassium</keyword>
<keyword id="KW-1185">Reference proteome</keyword>
<keyword id="KW-0819">tRNA processing</keyword>
<name>MNME_ECOLI</name>
<reference key="1">
    <citation type="journal article" date="1991" name="J. Bacteriol.">
        <title>Molecular cloning and sequence of the thdF gene, which is involved in thiophene and furan oxidation by Escherichia coli.</title>
        <authorList>
            <person name="Alam K.Y."/>
            <person name="Clark D.P."/>
        </authorList>
    </citation>
    <scope>PRELIMINARY NUCLEOTIDE SEQUENCE [GENOMIC DNA]</scope>
    <source>
        <strain>K12</strain>
    </source>
</reference>
<reference key="2">
    <citation type="journal article" date="1993" name="Genomics">
        <title>DNA sequence and analysis of 136 kilobases of the Escherichia coli genome: organizational symmetry around the origin of replication.</title>
        <authorList>
            <person name="Burland V.D."/>
            <person name="Plunkett G. III"/>
            <person name="Daniels D.L."/>
            <person name="Blattner F.R."/>
        </authorList>
    </citation>
    <scope>NUCLEOTIDE SEQUENCE [LARGE SCALE GENOMIC DNA]</scope>
    <source>
        <strain>K12 / MG1655 / ATCC 47076</strain>
    </source>
</reference>
<reference key="3">
    <citation type="journal article" date="1997" name="Science">
        <title>The complete genome sequence of Escherichia coli K-12.</title>
        <authorList>
            <person name="Blattner F.R."/>
            <person name="Plunkett G. III"/>
            <person name="Bloch C.A."/>
            <person name="Perna N.T."/>
            <person name="Burland V."/>
            <person name="Riley M."/>
            <person name="Collado-Vides J."/>
            <person name="Glasner J.D."/>
            <person name="Rode C.K."/>
            <person name="Mayhew G.F."/>
            <person name="Gregor J."/>
            <person name="Davis N.W."/>
            <person name="Kirkpatrick H.A."/>
            <person name="Goeden M.A."/>
            <person name="Rose D.J."/>
            <person name="Mau B."/>
            <person name="Shao Y."/>
        </authorList>
    </citation>
    <scope>NUCLEOTIDE SEQUENCE [LARGE SCALE GENOMIC DNA]</scope>
    <source>
        <strain>K12 / MG1655 / ATCC 47076</strain>
    </source>
</reference>
<reference key="4">
    <citation type="journal article" date="2006" name="Mol. Syst. Biol.">
        <title>Highly accurate genome sequences of Escherichia coli K-12 strains MG1655 and W3110.</title>
        <authorList>
            <person name="Hayashi K."/>
            <person name="Morooka N."/>
            <person name="Yamamoto Y."/>
            <person name="Fujita K."/>
            <person name="Isono K."/>
            <person name="Choi S."/>
            <person name="Ohtsubo E."/>
            <person name="Baba T."/>
            <person name="Wanner B.L."/>
            <person name="Mori H."/>
            <person name="Horiuchi T."/>
        </authorList>
    </citation>
    <scope>NUCLEOTIDE SEQUENCE [LARGE SCALE GENOMIC DNA]</scope>
    <source>
        <strain>K12 / W3110 / ATCC 27325 / DSM 5911</strain>
    </source>
</reference>
<reference key="5">
    <citation type="journal article" date="1999" name="EMBO J.">
        <title>The Escherichia coli trmE (mnmE) gene, involved in tRNA modification, codes for an evolutionarily conserved GTPase with unusual biochemical properties.</title>
        <authorList>
            <person name="Cabedo H."/>
            <person name="Macian F."/>
            <person name="Villarroya M."/>
            <person name="Escudero J.C."/>
            <person name="Martinez-Vicente M."/>
            <person name="Knecht E."/>
            <person name="Armengod M.-E."/>
        </authorList>
    </citation>
    <scope>CHARACTERIZATION</scope>
    <scope>SUBCELLULAR LOCATION</scope>
</reference>
<reference key="6">
    <citation type="journal article" date="2003" name="J. Biol. Chem.">
        <title>The GTPase activity and C-terminal cysteine of the Escherichia coli MnmE protein are essential for its tRNA modifying function.</title>
        <authorList>
            <person name="Yim L."/>
            <person name="Martinez-Vicente M."/>
            <person name="Villarroya M."/>
            <person name="Aguado C."/>
            <person name="Knecht E."/>
            <person name="Armengod M.-E."/>
        </authorList>
    </citation>
    <scope>GTPASE ACTIVITY</scope>
    <scope>BIOPHYSICOCHEMICAL PROPERTIES</scope>
    <scope>MUTAGENESIS OF GLY-228; ASP-270; ASP-338 AND CYS-451</scope>
</reference>
<reference key="7">
    <citation type="journal article" date="2005" name="J. Biol. Chem.">
        <title>Effects of mutagenesis in the switch I region and conserved arginines of Escherichia coli MnmE protein, a GTPase involved in tRNA modification.</title>
        <authorList>
            <person name="Martinez-Vicente M."/>
            <person name="Yim L."/>
            <person name="Villarroya M."/>
            <person name="Mellado M."/>
            <person name="Perez-Paya E."/>
            <person name="Bjoerk G.R."/>
            <person name="Armengod M.-E."/>
        </authorList>
    </citation>
    <scope>MUTAGENESIS OF ARG-224; GLY-249; THR-250; THR-251; ARG-252; ASP-253; ARG-256; ARG-275 AND ARG-288</scope>
</reference>
<reference key="8">
    <citation type="journal article" date="2006" name="Nucleic Acids Res.">
        <title>Further insights into the tRNA modification process controlled by proteins MnmE and GidA of Escherichia coli.</title>
        <authorList>
            <person name="Yim L."/>
            <person name="Moukadiri I."/>
            <person name="Bjoerk G.R."/>
            <person name="Armengod M.-E."/>
        </authorList>
    </citation>
    <scope>INTERACTION WITH MNMG</scope>
    <source>
        <strain>K12</strain>
    </source>
</reference>
<reference key="9">
    <citation type="journal article" date="2006" name="EMBO J.">
        <title>Dimerisation-dependent GTPase reaction of MnmE: how potassium acts as GTPase-activating element.</title>
        <authorList>
            <person name="Scrima A."/>
            <person name="Wittinghofer A."/>
        </authorList>
    </citation>
    <scope>X-RAY CRYSTALLOGRAPHY (1.7 ANGSTROMS) OF 216-384 IN COMPLEXES WITH GDP; TRANSITION STATE ANALOG; MAGNESIUM AND POTASSIUM IONS</scope>
    <scope>SUBUNIT</scope>
    <scope>MUTAGENESIS OF ASN-226; LEU-255 AND GLU-282</scope>
</reference>
<reference key="10">
    <citation type="journal article" date="2007" name="Proteins">
        <title>Structural insights into the GTPase domain of Escherichia coli MnmE protein.</title>
        <authorList>
            <person name="Monleon D."/>
            <person name="Martinez-Vicente M."/>
            <person name="Esteve V."/>
            <person name="Yim L."/>
            <person name="Prado S."/>
            <person name="Armengod M.-E."/>
            <person name="Celda B."/>
        </authorList>
    </citation>
    <scope>STRUCTURE BY NMR OF 210-377</scope>
    <scope>BIOPHYSICOCHEMICAL PROPERTIES</scope>
</reference>
<proteinExistence type="evidence at protein level"/>
<sequence>MSDNDTIVAQATPPGRGGVGILRISGFKAREVAETVLGKLPKPRYADYLPFKDADGSVLDQGIALWFPGPNSFTGEDVLELQGHGGPVILDLLLKRILTIPGLRIARPGEFSERAFLNDKLDLAQAEAIADLIDASSEQAARSALNSLQGAFSARVNHLVEALTHLRIYVEAAIDFPDEEIDFLSDGKIEAQLNDVIADLDAVRAEARQGSLLREGMKVVIAGRPNAGKSSLLNALAGREAAIVTDIAGTTRDVLREHIHIDGMPLHIIDTAGLREASDEVERIGIERAWQEIEQADRVLFMVDGTTTDAVDPAEIWPEFIARLPAKLPITVVRNKADITGETLGMSEVNGHALIRLSARTGEGVDVLRNHLKQSMGFDTNMEGGFLARRRHLQALEQAAEHLQQGKAQLLGAWAGELLAEELRLAQQNLSEITGEFTSDDLLGRIFSSFCIGK</sequence>
<comment type="function">
    <text>Exhibits a very high intrinsic GTPase hydrolysis rate. Involved in the addition of a carboxymethylaminomethyl (cmnm) group at the wobble position (U34) of certain tRNAs, forming tRNA-cmnm(5)s(2)U34.</text>
</comment>
<comment type="cofactor">
    <cofactor>
        <name>K(+)</name>
        <dbReference type="ChEBI" id="CHEBI:29103"/>
    </cofactor>
    <text>Binds 1 potassium ion per subunit.</text>
</comment>
<comment type="activity regulation">
    <text>GTPase activity is strongly activated by potassium ions.</text>
</comment>
<comment type="biophysicochemical properties">
    <kinetics>
        <KM evidence="3 6">511 uM for GTP</KM>
        <KM evidence="3 6">346 uM for XTP</KM>
        <Vmax evidence="3 6">193.0 nmol/min/mg enzyme with GTP as substrate</Vmax>
        <Vmax evidence="3 6">100.0 nmol/min/mg enzyme with XTP as substrate</Vmax>
    </kinetics>
    <phDependence>
        <text evidence="3 6">Optimum pH is 7.5-9.5.</text>
    </phDependence>
</comment>
<comment type="subunit">
    <text evidence="1 5">Homodimer. Heterotetramer of two MnmE and two MnmG subunits.</text>
</comment>
<comment type="interaction">
    <interactant intactId="EBI-550986">
        <id>P25522</id>
    </interactant>
    <interactant intactId="EBI-550986">
        <id>P25522</id>
        <label>mnmE</label>
    </interactant>
    <organismsDiffer>false</organismsDiffer>
    <experiments>3</experiments>
</comment>
<comment type="interaction">
    <interactant intactId="EBI-550986">
        <id>P25522</id>
    </interactant>
    <interactant intactId="EBI-550977">
        <id>P0A6U3</id>
        <label>mnmG</label>
    </interactant>
    <organismsDiffer>false</organismsDiffer>
    <experiments>6</experiments>
</comment>
<comment type="interaction">
    <interactant intactId="EBI-550986">
        <id>P25522</id>
    </interactant>
    <interactant intactId="EBI-562069">
        <id>P69432</id>
        <label>pgaD</label>
    </interactant>
    <organismsDiffer>false</organismsDiffer>
    <experiments>5</experiments>
</comment>
<comment type="subcellular location">
    <subcellularLocation>
        <location evidence="1 2">Cytoplasm</location>
    </subcellularLocation>
    <text>Partially associated with the inner membrane.</text>
</comment>
<comment type="similarity">
    <text evidence="1">Belongs to the TRAFAC class TrmE-Era-EngA-EngB-Septin-like GTPase superfamily. TrmE GTPase family.</text>
</comment>
<comment type="sequence caution" evidence="7">
    <conflict type="miscellaneous discrepancy">
        <sequence resource="EMBL-CDS" id="AAB19981"/>
    </conflict>
</comment>
<organism>
    <name type="scientific">Escherichia coli (strain K12)</name>
    <dbReference type="NCBI Taxonomy" id="83333"/>
    <lineage>
        <taxon>Bacteria</taxon>
        <taxon>Pseudomonadati</taxon>
        <taxon>Pseudomonadota</taxon>
        <taxon>Gammaproteobacteria</taxon>
        <taxon>Enterobacterales</taxon>
        <taxon>Enterobacteriaceae</taxon>
        <taxon>Escherichia</taxon>
    </lineage>
</organism>
<feature type="chain" id="PRO_0000188874" description="tRNA modification GTPase MnmE">
    <location>
        <begin position="1"/>
        <end position="454"/>
    </location>
</feature>
<feature type="domain" description="TrmE-type G">
    <location>
        <begin position="216"/>
        <end position="377"/>
    </location>
</feature>
<feature type="binding site" evidence="1">
    <location>
        <position position="23"/>
    </location>
    <ligand>
        <name>(6S)-5-formyl-5,6,7,8-tetrahydrofolate</name>
        <dbReference type="ChEBI" id="CHEBI:57457"/>
    </ligand>
</feature>
<feature type="binding site" evidence="1">
    <location>
        <position position="80"/>
    </location>
    <ligand>
        <name>(6S)-5-formyl-5,6,7,8-tetrahydrofolate</name>
        <dbReference type="ChEBI" id="CHEBI:57457"/>
    </ligand>
</feature>
<feature type="binding site" evidence="1">
    <location>
        <position position="120"/>
    </location>
    <ligand>
        <name>(6S)-5-formyl-5,6,7,8-tetrahydrofolate</name>
        <dbReference type="ChEBI" id="CHEBI:57457"/>
    </ligand>
</feature>
<feature type="binding site">
    <location>
        <begin position="226"/>
        <end position="231"/>
    </location>
    <ligand>
        <name>GTP</name>
        <dbReference type="ChEBI" id="CHEBI:37565"/>
    </ligand>
</feature>
<feature type="binding site">
    <location>
        <position position="226"/>
    </location>
    <ligand>
        <name>K(+)</name>
        <dbReference type="ChEBI" id="CHEBI:29103"/>
    </ligand>
</feature>
<feature type="binding site">
    <location>
        <position position="230"/>
    </location>
    <ligand>
        <name>Mg(2+)</name>
        <dbReference type="ChEBI" id="CHEBI:18420"/>
    </ligand>
</feature>
<feature type="binding site">
    <location>
        <begin position="245"/>
        <end position="251"/>
    </location>
    <ligand>
        <name>GTP</name>
        <dbReference type="ChEBI" id="CHEBI:37565"/>
    </ligand>
</feature>
<feature type="binding site">
    <location>
        <position position="245"/>
    </location>
    <ligand>
        <name>K(+)</name>
        <dbReference type="ChEBI" id="CHEBI:29103"/>
    </ligand>
</feature>
<feature type="binding site">
    <location>
        <position position="247"/>
    </location>
    <ligand>
        <name>K(+)</name>
        <dbReference type="ChEBI" id="CHEBI:29103"/>
    </ligand>
</feature>
<feature type="binding site">
    <location>
        <position position="250"/>
    </location>
    <ligand>
        <name>K(+)</name>
        <dbReference type="ChEBI" id="CHEBI:29103"/>
    </ligand>
</feature>
<feature type="binding site">
    <location>
        <position position="251"/>
    </location>
    <ligand>
        <name>Mg(2+)</name>
        <dbReference type="ChEBI" id="CHEBI:18420"/>
    </ligand>
</feature>
<feature type="binding site">
    <location>
        <begin position="270"/>
        <end position="273"/>
    </location>
    <ligand>
        <name>GTP</name>
        <dbReference type="ChEBI" id="CHEBI:37565"/>
    </ligand>
</feature>
<feature type="binding site">
    <location>
        <begin position="335"/>
        <end position="338"/>
    </location>
    <ligand>
        <name>GTP</name>
        <dbReference type="ChEBI" id="CHEBI:37565"/>
    </ligand>
</feature>
<feature type="binding site">
    <location>
        <begin position="358"/>
        <end position="360"/>
    </location>
    <ligand>
        <name>GTP</name>
        <dbReference type="ChEBI" id="CHEBI:37565"/>
    </ligand>
</feature>
<feature type="binding site" evidence="1">
    <location>
        <position position="454"/>
    </location>
    <ligand>
        <name>(6S)-5-formyl-5,6,7,8-tetrahydrofolate</name>
        <dbReference type="ChEBI" id="CHEBI:57457"/>
    </ligand>
</feature>
<feature type="mutagenesis site" description="1.5-fold decrease in GTPase activity and almost no change in affinity." evidence="4">
    <original>R</original>
    <variation>A</variation>
    <location>
        <position position="224"/>
    </location>
</feature>
<feature type="mutagenesis site" description="100-fold decrease in GTPase activity. 5-fold decrease of affinity for GTP." evidence="5">
    <original>N</original>
    <variation>A</variation>
    <location>
        <position position="226"/>
    </location>
</feature>
<feature type="mutagenesis site" description="70-fold decrease in GTPase activity. 2-fold decrease of affinity for GTP." evidence="5">
    <original>N</original>
    <variation>K</variation>
    <location>
        <position position="226"/>
    </location>
</feature>
<feature type="mutagenesis site" description="Loss of GTP binding and hydrolase activity. Completely impairs tRNA modifying function." evidence="3">
    <original>G</original>
    <variation>A</variation>
    <location>
        <position position="228"/>
    </location>
</feature>
<feature type="mutagenesis site" description="22-fold decrease in GTPase activity and 7-fold increase of affinity." evidence="4">
    <original>G</original>
    <variation>A</variation>
    <location>
        <position position="249"/>
    </location>
</feature>
<feature type="mutagenesis site" description="4-fold decrease in GTPase activity and 1.5-fold increase of affinity." evidence="4">
    <original>T</original>
    <variation>A</variation>
    <location>
        <position position="250"/>
    </location>
</feature>
<feature type="mutagenesis site" description="1.8-fold decrease in GTPase activity and 1.5-fold increase of affinity." evidence="4">
    <original>T</original>
    <variation>S</variation>
    <location>
        <position position="250"/>
    </location>
</feature>
<feature type="mutagenesis site" description="92-fold decrease in GTPase activity and 59-fold increase of affinity." evidence="4">
    <original>T</original>
    <variation>A</variation>
    <location>
        <position position="251"/>
    </location>
</feature>
<feature type="mutagenesis site" description="4-fold decrease in GTPase activity and 1.2-fold decrease of affinity." evidence="4">
    <original>T</original>
    <variation>S</variation>
    <location>
        <position position="251"/>
    </location>
</feature>
<feature type="mutagenesis site" description="7-fold decrease in GTPase activity and 6-fold increase of affinity." evidence="4">
    <original>R</original>
    <variation>A</variation>
    <location>
        <position position="252"/>
    </location>
</feature>
<feature type="mutagenesis site" description="2-fold decrease in GTPase activity and no change in affinity." evidence="4">
    <original>R</original>
    <variation>K</variation>
    <location>
        <position position="252"/>
    </location>
</feature>
<feature type="mutagenesis site" description="9-fold decrease in GTPase activity and 13-fold increase of affinity." evidence="4">
    <original>D</original>
    <variation>A</variation>
    <location>
        <position position="253"/>
    </location>
</feature>
<feature type="mutagenesis site" description="1.5-fold decrease in affinity for GTP." evidence="5">
    <original>L</original>
    <variation>D</variation>
    <location>
        <position position="255"/>
    </location>
</feature>
<feature type="mutagenesis site" description="2-fold decrease in GTPase activity and almost no change in affinity." evidence="4">
    <original>R</original>
    <variation>A</variation>
    <location>
        <position position="256"/>
    </location>
</feature>
<feature type="mutagenesis site" description="Does not affect GTP binding, but impairs hydrolase activity. Completely impairs tRNA modifying function." evidence="3">
    <original>D</original>
    <variation>A</variation>
    <location>
        <position position="270"/>
    </location>
</feature>
<feature type="mutagenesis site" description="6-fold decrease in GTPase activity and 1.9-fold increase of affinity." evidence="4">
    <original>R</original>
    <variation>A</variation>
    <location>
        <position position="275"/>
    </location>
</feature>
<feature type="mutagenesis site" description="1900-fold decrease in GTPase activity." evidence="5">
    <original>E</original>
    <variation>A</variation>
    <location>
        <position position="282"/>
    </location>
</feature>
<feature type="mutagenesis site" description="370-fold decrease in GTPase activity." evidence="5">
    <original>E</original>
    <variation>Q</variation>
    <location>
        <position position="282"/>
    </location>
</feature>
<feature type="mutagenesis site" description="1.7-fold decrease in GTPase activity and 1.5-fold increase of affinity." evidence="4">
    <original>R</original>
    <variation>A</variation>
    <location>
        <position position="288"/>
    </location>
</feature>
<feature type="mutagenesis site" description="Strong decrease in GTP binding. Does not affect hydrolase activity, but has 10-fold higher affinity for XTP than for GTP. Partially impairs tRNA modifying function." evidence="3">
    <original>D</original>
    <variation>N</variation>
    <location>
        <position position="338"/>
    </location>
</feature>
<feature type="mutagenesis site" description="No change in GTP binding and hydrolase activity. Does not affect association to the cell inner membrane. Completely impairs tRNA modifying function." evidence="3">
    <original>C</original>
    <variation>S</variation>
    <location>
        <position position="451"/>
    </location>
</feature>
<feature type="strand" evidence="8">
    <location>
        <begin position="217"/>
        <end position="224"/>
    </location>
</feature>
<feature type="helix" evidence="8">
    <location>
        <begin position="229"/>
        <end position="237"/>
    </location>
</feature>
<feature type="strand" evidence="8">
    <location>
        <begin position="255"/>
        <end position="261"/>
    </location>
</feature>
<feature type="strand" evidence="8">
    <location>
        <begin position="264"/>
        <end position="270"/>
    </location>
</feature>
<feature type="helix" evidence="8">
    <location>
        <begin position="280"/>
        <end position="294"/>
    </location>
</feature>
<feature type="strand" evidence="8">
    <location>
        <begin position="297"/>
        <end position="304"/>
    </location>
</feature>
<feature type="turn" evidence="8">
    <location>
        <begin position="305"/>
        <end position="307"/>
    </location>
</feature>
<feature type="helix" evidence="8">
    <location>
        <begin position="313"/>
        <end position="316"/>
    </location>
</feature>
<feature type="helix" evidence="8">
    <location>
        <begin position="318"/>
        <end position="323"/>
    </location>
</feature>
<feature type="strand" evidence="8">
    <location>
        <begin position="330"/>
        <end position="335"/>
    </location>
</feature>
<feature type="helix" evidence="8">
    <location>
        <begin position="337"/>
        <end position="340"/>
    </location>
</feature>
<feature type="strand" evidence="8">
    <location>
        <begin position="345"/>
        <end position="349"/>
    </location>
</feature>
<feature type="strand" evidence="8">
    <location>
        <begin position="352"/>
        <end position="356"/>
    </location>
</feature>
<feature type="turn" evidence="8">
    <location>
        <begin position="359"/>
        <end position="361"/>
    </location>
</feature>
<feature type="helix" evidence="8">
    <location>
        <begin position="365"/>
        <end position="375"/>
    </location>
</feature>
<protein>
    <recommendedName>
        <fullName evidence="1">tRNA modification GTPase MnmE</fullName>
        <ecNumber evidence="1">3.6.-.-</ecNumber>
    </recommendedName>
</protein>